<evidence type="ECO:0000250" key="1"/>
<evidence type="ECO:0000255" key="2">
    <source>
        <dbReference type="HAMAP-Rule" id="MF_00118"/>
    </source>
</evidence>
<protein>
    <recommendedName>
        <fullName evidence="2">Elongation factor Tu</fullName>
        <shortName evidence="2">EF-Tu</shortName>
        <ecNumber evidence="2">3.6.5.3</ecNumber>
    </recommendedName>
</protein>
<accession>P0A3B0</accession>
<accession>Q8KI92</accession>
<comment type="function">
    <text evidence="2">GTP hydrolase that promotes the GTP-dependent binding of aminoacyl-tRNA to the A-site of ribosomes during protein biosynthesis.</text>
</comment>
<comment type="catalytic activity">
    <reaction evidence="2">
        <text>GTP + H2O = GDP + phosphate + H(+)</text>
        <dbReference type="Rhea" id="RHEA:19669"/>
        <dbReference type="ChEBI" id="CHEBI:15377"/>
        <dbReference type="ChEBI" id="CHEBI:15378"/>
        <dbReference type="ChEBI" id="CHEBI:37565"/>
        <dbReference type="ChEBI" id="CHEBI:43474"/>
        <dbReference type="ChEBI" id="CHEBI:58189"/>
        <dbReference type="EC" id="3.6.5.3"/>
    </reaction>
    <physiologicalReaction direction="left-to-right" evidence="2">
        <dbReference type="Rhea" id="RHEA:19670"/>
    </physiologicalReaction>
</comment>
<comment type="subunit">
    <text evidence="2">Monomer.</text>
</comment>
<comment type="subcellular location">
    <subcellularLocation>
        <location evidence="2">Cytoplasm</location>
    </subcellularLocation>
</comment>
<comment type="similarity">
    <text evidence="2">Belongs to the TRAFAC class translation factor GTPase superfamily. Classic translation factor GTPase family. EF-Tu/EF-1A subfamily.</text>
</comment>
<reference key="1">
    <citation type="journal article" date="2002" name="Mol. Biol. Evol.">
        <title>Proliferation and deterioration of Rickettsia palindromic elements.</title>
        <authorList>
            <person name="Amiri H."/>
            <person name="Alsmark C.M."/>
            <person name="Andersson S.G.E."/>
        </authorList>
    </citation>
    <scope>NUCLEOTIDE SEQUENCE [GENOMIC DNA]</scope>
</reference>
<gene>
    <name evidence="2" type="primary">tuf</name>
</gene>
<name>EFTU_RICSI</name>
<keyword id="KW-0963">Cytoplasm</keyword>
<keyword id="KW-0251">Elongation factor</keyword>
<keyword id="KW-0342">GTP-binding</keyword>
<keyword id="KW-0378">Hydrolase</keyword>
<keyword id="KW-0460">Magnesium</keyword>
<keyword id="KW-0479">Metal-binding</keyword>
<keyword id="KW-0547">Nucleotide-binding</keyword>
<keyword id="KW-0648">Protein biosynthesis</keyword>
<proteinExistence type="inferred from homology"/>
<dbReference type="EC" id="3.6.5.3" evidence="2"/>
<dbReference type="EMBL" id="AF502181">
    <property type="protein sequence ID" value="AAM90934.1"/>
    <property type="molecule type" value="Genomic_DNA"/>
</dbReference>
<dbReference type="SMR" id="P0A3B0"/>
<dbReference type="GO" id="GO:0005737">
    <property type="term" value="C:cytoplasm"/>
    <property type="evidence" value="ECO:0007669"/>
    <property type="project" value="UniProtKB-SubCell"/>
</dbReference>
<dbReference type="GO" id="GO:0005525">
    <property type="term" value="F:GTP binding"/>
    <property type="evidence" value="ECO:0007669"/>
    <property type="project" value="UniProtKB-UniRule"/>
</dbReference>
<dbReference type="GO" id="GO:0003924">
    <property type="term" value="F:GTPase activity"/>
    <property type="evidence" value="ECO:0007669"/>
    <property type="project" value="InterPro"/>
</dbReference>
<dbReference type="GO" id="GO:0097216">
    <property type="term" value="F:guanosine tetraphosphate binding"/>
    <property type="evidence" value="ECO:0007669"/>
    <property type="project" value="UniProtKB-ARBA"/>
</dbReference>
<dbReference type="GO" id="GO:0003746">
    <property type="term" value="F:translation elongation factor activity"/>
    <property type="evidence" value="ECO:0007669"/>
    <property type="project" value="UniProtKB-UniRule"/>
</dbReference>
<dbReference type="CDD" id="cd01884">
    <property type="entry name" value="EF_Tu"/>
    <property type="match status" value="1"/>
</dbReference>
<dbReference type="CDD" id="cd03697">
    <property type="entry name" value="EFTU_II"/>
    <property type="match status" value="1"/>
</dbReference>
<dbReference type="CDD" id="cd03707">
    <property type="entry name" value="EFTU_III"/>
    <property type="match status" value="1"/>
</dbReference>
<dbReference type="FunFam" id="2.40.30.10:FF:000001">
    <property type="entry name" value="Elongation factor Tu"/>
    <property type="match status" value="1"/>
</dbReference>
<dbReference type="FunFam" id="3.40.50.300:FF:000003">
    <property type="entry name" value="Elongation factor Tu"/>
    <property type="match status" value="1"/>
</dbReference>
<dbReference type="Gene3D" id="3.40.50.300">
    <property type="entry name" value="P-loop containing nucleotide triphosphate hydrolases"/>
    <property type="match status" value="1"/>
</dbReference>
<dbReference type="Gene3D" id="2.40.30.10">
    <property type="entry name" value="Translation factors"/>
    <property type="match status" value="2"/>
</dbReference>
<dbReference type="HAMAP" id="MF_00118_B">
    <property type="entry name" value="EF_Tu_B"/>
    <property type="match status" value="1"/>
</dbReference>
<dbReference type="InterPro" id="IPR041709">
    <property type="entry name" value="EF-Tu_GTP-bd"/>
</dbReference>
<dbReference type="InterPro" id="IPR050055">
    <property type="entry name" value="EF-Tu_GTPase"/>
</dbReference>
<dbReference type="InterPro" id="IPR004161">
    <property type="entry name" value="EFTu-like_2"/>
</dbReference>
<dbReference type="InterPro" id="IPR033720">
    <property type="entry name" value="EFTU_2"/>
</dbReference>
<dbReference type="InterPro" id="IPR031157">
    <property type="entry name" value="G_TR_CS"/>
</dbReference>
<dbReference type="InterPro" id="IPR027417">
    <property type="entry name" value="P-loop_NTPase"/>
</dbReference>
<dbReference type="InterPro" id="IPR005225">
    <property type="entry name" value="Small_GTP-bd"/>
</dbReference>
<dbReference type="InterPro" id="IPR000795">
    <property type="entry name" value="T_Tr_GTP-bd_dom"/>
</dbReference>
<dbReference type="InterPro" id="IPR009000">
    <property type="entry name" value="Transl_B-barrel_sf"/>
</dbReference>
<dbReference type="InterPro" id="IPR009001">
    <property type="entry name" value="Transl_elong_EF1A/Init_IF2_C"/>
</dbReference>
<dbReference type="InterPro" id="IPR004541">
    <property type="entry name" value="Transl_elong_EFTu/EF1A_bac/org"/>
</dbReference>
<dbReference type="InterPro" id="IPR004160">
    <property type="entry name" value="Transl_elong_EFTu/EF1A_C"/>
</dbReference>
<dbReference type="NCBIfam" id="TIGR00485">
    <property type="entry name" value="EF-Tu"/>
    <property type="match status" value="1"/>
</dbReference>
<dbReference type="NCBIfam" id="NF000766">
    <property type="entry name" value="PRK00049.1"/>
    <property type="match status" value="1"/>
</dbReference>
<dbReference type="NCBIfam" id="NF009372">
    <property type="entry name" value="PRK12735.1"/>
    <property type="match status" value="1"/>
</dbReference>
<dbReference type="NCBIfam" id="NF009373">
    <property type="entry name" value="PRK12736.1"/>
    <property type="match status" value="1"/>
</dbReference>
<dbReference type="NCBIfam" id="TIGR00231">
    <property type="entry name" value="small_GTP"/>
    <property type="match status" value="1"/>
</dbReference>
<dbReference type="PANTHER" id="PTHR43721:SF22">
    <property type="entry name" value="ELONGATION FACTOR TU, MITOCHONDRIAL"/>
    <property type="match status" value="1"/>
</dbReference>
<dbReference type="PANTHER" id="PTHR43721">
    <property type="entry name" value="ELONGATION FACTOR TU-RELATED"/>
    <property type="match status" value="1"/>
</dbReference>
<dbReference type="Pfam" id="PF00009">
    <property type="entry name" value="GTP_EFTU"/>
    <property type="match status" value="1"/>
</dbReference>
<dbReference type="Pfam" id="PF03144">
    <property type="entry name" value="GTP_EFTU_D2"/>
    <property type="match status" value="1"/>
</dbReference>
<dbReference type="Pfam" id="PF03143">
    <property type="entry name" value="GTP_EFTU_D3"/>
    <property type="match status" value="1"/>
</dbReference>
<dbReference type="PRINTS" id="PR00315">
    <property type="entry name" value="ELONGATNFCT"/>
</dbReference>
<dbReference type="SUPFAM" id="SSF50465">
    <property type="entry name" value="EF-Tu/eEF-1alpha/eIF2-gamma C-terminal domain"/>
    <property type="match status" value="1"/>
</dbReference>
<dbReference type="SUPFAM" id="SSF52540">
    <property type="entry name" value="P-loop containing nucleoside triphosphate hydrolases"/>
    <property type="match status" value="1"/>
</dbReference>
<dbReference type="SUPFAM" id="SSF50447">
    <property type="entry name" value="Translation proteins"/>
    <property type="match status" value="1"/>
</dbReference>
<dbReference type="PROSITE" id="PS00301">
    <property type="entry name" value="G_TR_1"/>
    <property type="match status" value="1"/>
</dbReference>
<dbReference type="PROSITE" id="PS51722">
    <property type="entry name" value="G_TR_2"/>
    <property type="match status" value="1"/>
</dbReference>
<organism>
    <name type="scientific">Rickettsia sibirica</name>
    <dbReference type="NCBI Taxonomy" id="35793"/>
    <lineage>
        <taxon>Bacteria</taxon>
        <taxon>Pseudomonadati</taxon>
        <taxon>Pseudomonadota</taxon>
        <taxon>Alphaproteobacteria</taxon>
        <taxon>Rickettsiales</taxon>
        <taxon>Rickettsiaceae</taxon>
        <taxon>Rickettsieae</taxon>
        <taxon>Rickettsia</taxon>
        <taxon>spotted fever group</taxon>
        <taxon>Rickettsia sibirica subgroup</taxon>
    </lineage>
</organism>
<sequence>MAKAKFERTKPHVNIGTIGHVDHGKTSLTAAITIVLAKTGGAQATAYDQIDAAPEEKERGITISTAHVEYETKNRHYAHVDCPGHADYVKNMITGAAQMDGAILVVSAADGPMPQTREHILLAKQVGVPAMVVFLNKIDMVDDPDLLELVEMEVRELLSKYGFPGDEIPIIKGSALQALEGKPEGEKAINELMDAVDSYIPQPVRATDKPFLMPIEDVFSISGRGTVVTGRVESGIIKVGEEIEIVGLKDTQKTTCTGVEMFRKLLDEGQAGDNVGILLRGTKREEVERGQVLAKPGSIKPHDKFEAEVYVLSKEEGGRHTPFTNDYRPQFYFRTTDVTGTIKLPADKQWVMPGDNATFTVELIKPIAMQEGLKFSIREGGRTVGAGVVTKINN</sequence>
<feature type="chain" id="PRO_0000091381" description="Elongation factor Tu">
    <location>
        <begin position="1"/>
        <end position="394"/>
    </location>
</feature>
<feature type="domain" description="tr-type G">
    <location>
        <begin position="10"/>
        <end position="204"/>
    </location>
</feature>
<feature type="region of interest" description="G1" evidence="1">
    <location>
        <begin position="19"/>
        <end position="26"/>
    </location>
</feature>
<feature type="region of interest" description="G2" evidence="1">
    <location>
        <begin position="60"/>
        <end position="64"/>
    </location>
</feature>
<feature type="region of interest" description="G3" evidence="1">
    <location>
        <begin position="81"/>
        <end position="84"/>
    </location>
</feature>
<feature type="region of interest" description="G4" evidence="1">
    <location>
        <begin position="136"/>
        <end position="139"/>
    </location>
</feature>
<feature type="region of interest" description="G5" evidence="1">
    <location>
        <begin position="174"/>
        <end position="176"/>
    </location>
</feature>
<feature type="binding site" evidence="2">
    <location>
        <begin position="19"/>
        <end position="26"/>
    </location>
    <ligand>
        <name>GTP</name>
        <dbReference type="ChEBI" id="CHEBI:37565"/>
    </ligand>
</feature>
<feature type="binding site" evidence="2">
    <location>
        <position position="26"/>
    </location>
    <ligand>
        <name>Mg(2+)</name>
        <dbReference type="ChEBI" id="CHEBI:18420"/>
    </ligand>
</feature>
<feature type="binding site" evidence="2">
    <location>
        <begin position="81"/>
        <end position="85"/>
    </location>
    <ligand>
        <name>GTP</name>
        <dbReference type="ChEBI" id="CHEBI:37565"/>
    </ligand>
</feature>
<feature type="binding site" evidence="2">
    <location>
        <begin position="136"/>
        <end position="139"/>
    </location>
    <ligand>
        <name>GTP</name>
        <dbReference type="ChEBI" id="CHEBI:37565"/>
    </ligand>
</feature>